<reference key="1">
    <citation type="journal article" date="2005" name="Genome Res.">
        <title>Coping with cold: the genome of the versatile marine Antarctica bacterium Pseudoalteromonas haloplanktis TAC125.</title>
        <authorList>
            <person name="Medigue C."/>
            <person name="Krin E."/>
            <person name="Pascal G."/>
            <person name="Barbe V."/>
            <person name="Bernsel A."/>
            <person name="Bertin P.N."/>
            <person name="Cheung F."/>
            <person name="Cruveiller S."/>
            <person name="D'Amico S."/>
            <person name="Duilio A."/>
            <person name="Fang G."/>
            <person name="Feller G."/>
            <person name="Ho C."/>
            <person name="Mangenot S."/>
            <person name="Marino G."/>
            <person name="Nilsson J."/>
            <person name="Parrilli E."/>
            <person name="Rocha E.P.C."/>
            <person name="Rouy Z."/>
            <person name="Sekowska A."/>
            <person name="Tutino M.L."/>
            <person name="Vallenet D."/>
            <person name="von Heijne G."/>
            <person name="Danchin A."/>
        </authorList>
    </citation>
    <scope>NUCLEOTIDE SEQUENCE [LARGE SCALE GENOMIC DNA]</scope>
    <source>
        <strain>TAC 125</strain>
    </source>
</reference>
<name>CLPP_PSET1</name>
<accession>Q3IF46</accession>
<comment type="function">
    <text evidence="1">Cleaves peptides in various proteins in a process that requires ATP hydrolysis. Has a chymotrypsin-like activity. Plays a major role in the degradation of misfolded proteins.</text>
</comment>
<comment type="catalytic activity">
    <reaction evidence="1">
        <text>Hydrolysis of proteins to small peptides in the presence of ATP and magnesium. alpha-casein is the usual test substrate. In the absence of ATP, only oligopeptides shorter than five residues are hydrolyzed (such as succinyl-Leu-Tyr-|-NHMec, and Leu-Tyr-Leu-|-Tyr-Trp, in which cleavage of the -Tyr-|-Leu- and -Tyr-|-Trp bonds also occurs).</text>
        <dbReference type="EC" id="3.4.21.92"/>
    </reaction>
</comment>
<comment type="subunit">
    <text evidence="1">Fourteen ClpP subunits assemble into 2 heptameric rings which stack back to back to give a disk-like structure with a central cavity, resembling the structure of eukaryotic proteasomes.</text>
</comment>
<comment type="subcellular location">
    <subcellularLocation>
        <location evidence="1">Cytoplasm</location>
    </subcellularLocation>
</comment>
<comment type="similarity">
    <text evidence="1">Belongs to the peptidase S14 family.</text>
</comment>
<protein>
    <recommendedName>
        <fullName evidence="1">ATP-dependent Clp protease proteolytic subunit</fullName>
        <ecNumber evidence="1">3.4.21.92</ecNumber>
    </recommendedName>
    <alternativeName>
        <fullName evidence="1">Endopeptidase Clp</fullName>
    </alternativeName>
</protein>
<keyword id="KW-0963">Cytoplasm</keyword>
<keyword id="KW-0378">Hydrolase</keyword>
<keyword id="KW-0645">Protease</keyword>
<keyword id="KW-1185">Reference proteome</keyword>
<keyword id="KW-0720">Serine protease</keyword>
<feature type="chain" id="PRO_0000226458" description="ATP-dependent Clp protease proteolytic subunit">
    <location>
        <begin position="1"/>
        <end position="205"/>
    </location>
</feature>
<feature type="active site" description="Nucleophile" evidence="1">
    <location>
        <position position="107"/>
    </location>
</feature>
<feature type="active site" evidence="1">
    <location>
        <position position="132"/>
    </location>
</feature>
<organism>
    <name type="scientific">Pseudoalteromonas translucida (strain TAC 125)</name>
    <dbReference type="NCBI Taxonomy" id="326442"/>
    <lineage>
        <taxon>Bacteria</taxon>
        <taxon>Pseudomonadati</taxon>
        <taxon>Pseudomonadota</taxon>
        <taxon>Gammaproteobacteria</taxon>
        <taxon>Alteromonadales</taxon>
        <taxon>Pseudoalteromonadaceae</taxon>
        <taxon>Pseudoalteromonas</taxon>
    </lineage>
</organism>
<proteinExistence type="inferred from homology"/>
<evidence type="ECO:0000255" key="1">
    <source>
        <dbReference type="HAMAP-Rule" id="MF_00444"/>
    </source>
</evidence>
<dbReference type="EC" id="3.4.21.92" evidence="1"/>
<dbReference type="EMBL" id="CR954246">
    <property type="protein sequence ID" value="CAI87118.1"/>
    <property type="molecule type" value="Genomic_DNA"/>
</dbReference>
<dbReference type="SMR" id="Q3IF46"/>
<dbReference type="STRING" id="326442.PSHAa2062"/>
<dbReference type="MEROPS" id="S14.001"/>
<dbReference type="KEGG" id="pha:PSHAa2062"/>
<dbReference type="eggNOG" id="COG0740">
    <property type="taxonomic scope" value="Bacteria"/>
</dbReference>
<dbReference type="HOGENOM" id="CLU_058707_3_2_6"/>
<dbReference type="BioCyc" id="PHAL326442:PSHA_RS10185-MONOMER"/>
<dbReference type="Proteomes" id="UP000006843">
    <property type="component" value="Chromosome I"/>
</dbReference>
<dbReference type="GO" id="GO:0005737">
    <property type="term" value="C:cytoplasm"/>
    <property type="evidence" value="ECO:0007669"/>
    <property type="project" value="UniProtKB-SubCell"/>
</dbReference>
<dbReference type="GO" id="GO:0009368">
    <property type="term" value="C:endopeptidase Clp complex"/>
    <property type="evidence" value="ECO:0007669"/>
    <property type="project" value="TreeGrafter"/>
</dbReference>
<dbReference type="GO" id="GO:0004176">
    <property type="term" value="F:ATP-dependent peptidase activity"/>
    <property type="evidence" value="ECO:0007669"/>
    <property type="project" value="InterPro"/>
</dbReference>
<dbReference type="GO" id="GO:0051117">
    <property type="term" value="F:ATPase binding"/>
    <property type="evidence" value="ECO:0007669"/>
    <property type="project" value="TreeGrafter"/>
</dbReference>
<dbReference type="GO" id="GO:0004252">
    <property type="term" value="F:serine-type endopeptidase activity"/>
    <property type="evidence" value="ECO:0007669"/>
    <property type="project" value="UniProtKB-UniRule"/>
</dbReference>
<dbReference type="GO" id="GO:0006515">
    <property type="term" value="P:protein quality control for misfolded or incompletely synthesized proteins"/>
    <property type="evidence" value="ECO:0007669"/>
    <property type="project" value="TreeGrafter"/>
</dbReference>
<dbReference type="CDD" id="cd07017">
    <property type="entry name" value="S14_ClpP_2"/>
    <property type="match status" value="1"/>
</dbReference>
<dbReference type="FunFam" id="3.90.226.10:FF:000001">
    <property type="entry name" value="ATP-dependent Clp protease proteolytic subunit"/>
    <property type="match status" value="1"/>
</dbReference>
<dbReference type="Gene3D" id="3.90.226.10">
    <property type="entry name" value="2-enoyl-CoA Hydratase, Chain A, domain 1"/>
    <property type="match status" value="1"/>
</dbReference>
<dbReference type="HAMAP" id="MF_00444">
    <property type="entry name" value="ClpP"/>
    <property type="match status" value="1"/>
</dbReference>
<dbReference type="InterPro" id="IPR001907">
    <property type="entry name" value="ClpP"/>
</dbReference>
<dbReference type="InterPro" id="IPR029045">
    <property type="entry name" value="ClpP/crotonase-like_dom_sf"/>
</dbReference>
<dbReference type="InterPro" id="IPR023562">
    <property type="entry name" value="ClpP/TepA"/>
</dbReference>
<dbReference type="InterPro" id="IPR033135">
    <property type="entry name" value="ClpP_His_AS"/>
</dbReference>
<dbReference type="InterPro" id="IPR018215">
    <property type="entry name" value="ClpP_Ser_AS"/>
</dbReference>
<dbReference type="NCBIfam" id="TIGR00493">
    <property type="entry name" value="clpP"/>
    <property type="match status" value="1"/>
</dbReference>
<dbReference type="NCBIfam" id="NF001368">
    <property type="entry name" value="PRK00277.1"/>
    <property type="match status" value="1"/>
</dbReference>
<dbReference type="NCBIfam" id="NF009205">
    <property type="entry name" value="PRK12553.1"/>
    <property type="match status" value="1"/>
</dbReference>
<dbReference type="PANTHER" id="PTHR10381">
    <property type="entry name" value="ATP-DEPENDENT CLP PROTEASE PROTEOLYTIC SUBUNIT"/>
    <property type="match status" value="1"/>
</dbReference>
<dbReference type="PANTHER" id="PTHR10381:SF70">
    <property type="entry name" value="ATP-DEPENDENT CLP PROTEASE PROTEOLYTIC SUBUNIT"/>
    <property type="match status" value="1"/>
</dbReference>
<dbReference type="Pfam" id="PF00574">
    <property type="entry name" value="CLP_protease"/>
    <property type="match status" value="1"/>
</dbReference>
<dbReference type="PRINTS" id="PR00127">
    <property type="entry name" value="CLPPROTEASEP"/>
</dbReference>
<dbReference type="SUPFAM" id="SSF52096">
    <property type="entry name" value="ClpP/crotonase"/>
    <property type="match status" value="1"/>
</dbReference>
<dbReference type="PROSITE" id="PS00382">
    <property type="entry name" value="CLP_PROTEASE_HIS"/>
    <property type="match status" value="1"/>
</dbReference>
<dbReference type="PROSITE" id="PS00381">
    <property type="entry name" value="CLP_PROTEASE_SER"/>
    <property type="match status" value="1"/>
</dbReference>
<sequence>MNIGITDPLNALVPMVVEQTPKGERSYDIYSRLLKERIIFLTGPVEDNMANLILAQMLFLESENPDKDIFLYINSPGGSVTAGMAIYDTMNFIKPDVSTICVGQAASMGAFLLTAGAKGKRFCLPNSRVMIHQPLGGFQGQASDFEIHAKEILSIKDKLNRLMAEHTGQPLDVISKDTDRDNFMSADQAVDYGIVDSVFKNRASK</sequence>
<gene>
    <name evidence="1" type="primary">clpP</name>
    <name type="ordered locus">PSHAa2062</name>
</gene>